<keyword id="KW-0963">Cytoplasm</keyword>
<keyword id="KW-0648">Protein biosynthesis</keyword>
<feature type="chain" id="PRO_0000167579" description="Ribosome-recycling factor">
    <location>
        <begin position="1"/>
        <end position="185"/>
    </location>
</feature>
<gene>
    <name evidence="1" type="primary">frr</name>
    <name type="ordered locus">WD_0529</name>
</gene>
<reference key="1">
    <citation type="journal article" date="2004" name="PLoS Biol.">
        <title>Phylogenomics of the reproductive parasite Wolbachia pipientis wMel: a streamlined genome overrun by mobile genetic elements.</title>
        <authorList>
            <person name="Wu M."/>
            <person name="Sun L.V."/>
            <person name="Vamathevan J.J."/>
            <person name="Riegler M."/>
            <person name="DeBoy R.T."/>
            <person name="Brownlie J.C."/>
            <person name="McGraw E.A."/>
            <person name="Martin W."/>
            <person name="Esser C."/>
            <person name="Ahmadinejad N."/>
            <person name="Wiegand C."/>
            <person name="Madupu R."/>
            <person name="Beanan M.J."/>
            <person name="Brinkac L.M."/>
            <person name="Daugherty S.C."/>
            <person name="Durkin A.S."/>
            <person name="Kolonay J.F."/>
            <person name="Nelson W.C."/>
            <person name="Mohamoud Y."/>
            <person name="Lee P."/>
            <person name="Berry K.J."/>
            <person name="Young M.B."/>
            <person name="Utterback T.R."/>
            <person name="Weidman J.F."/>
            <person name="Nierman W.C."/>
            <person name="Paulsen I.T."/>
            <person name="Nelson K.E."/>
            <person name="Tettelin H."/>
            <person name="O'Neill S.L."/>
            <person name="Eisen J.A."/>
        </authorList>
    </citation>
    <scope>NUCLEOTIDE SEQUENCE [LARGE SCALE GENOMIC DNA]</scope>
</reference>
<proteinExistence type="inferred from homology"/>
<comment type="function">
    <text evidence="1">Responsible for the release of ribosomes from messenger RNA at the termination of protein biosynthesis. May increase the efficiency of translation by recycling ribosomes from one round of translation to another.</text>
</comment>
<comment type="subcellular location">
    <subcellularLocation>
        <location evidence="1">Cytoplasm</location>
    </subcellularLocation>
</comment>
<comment type="similarity">
    <text evidence="1">Belongs to the RRF family.</text>
</comment>
<name>RRF_WOLPM</name>
<dbReference type="EMBL" id="AE017196">
    <property type="protein sequence ID" value="AAS14241.1"/>
    <property type="molecule type" value="Genomic_DNA"/>
</dbReference>
<dbReference type="RefSeq" id="WP_010962658.1">
    <property type="nucleotide sequence ID" value="NZ_OX384529.1"/>
</dbReference>
<dbReference type="SMR" id="P61311"/>
<dbReference type="EnsemblBacteria" id="AAS14241">
    <property type="protein sequence ID" value="AAS14241"/>
    <property type="gene ID" value="WD_0529"/>
</dbReference>
<dbReference type="GeneID" id="70036014"/>
<dbReference type="KEGG" id="wol:WD_0529"/>
<dbReference type="eggNOG" id="COG0233">
    <property type="taxonomic scope" value="Bacteria"/>
</dbReference>
<dbReference type="Proteomes" id="UP000008215">
    <property type="component" value="Chromosome"/>
</dbReference>
<dbReference type="GO" id="GO:0005829">
    <property type="term" value="C:cytosol"/>
    <property type="evidence" value="ECO:0007669"/>
    <property type="project" value="GOC"/>
</dbReference>
<dbReference type="GO" id="GO:0043023">
    <property type="term" value="F:ribosomal large subunit binding"/>
    <property type="evidence" value="ECO:0007669"/>
    <property type="project" value="TreeGrafter"/>
</dbReference>
<dbReference type="GO" id="GO:0002184">
    <property type="term" value="P:cytoplasmic translational termination"/>
    <property type="evidence" value="ECO:0007669"/>
    <property type="project" value="TreeGrafter"/>
</dbReference>
<dbReference type="CDD" id="cd00520">
    <property type="entry name" value="RRF"/>
    <property type="match status" value="1"/>
</dbReference>
<dbReference type="FunFam" id="1.10.132.20:FF:000001">
    <property type="entry name" value="Ribosome-recycling factor"/>
    <property type="match status" value="1"/>
</dbReference>
<dbReference type="FunFam" id="3.30.1360.40:FF:000001">
    <property type="entry name" value="Ribosome-recycling factor"/>
    <property type="match status" value="1"/>
</dbReference>
<dbReference type="Gene3D" id="3.30.1360.40">
    <property type="match status" value="1"/>
</dbReference>
<dbReference type="Gene3D" id="1.10.132.20">
    <property type="entry name" value="Ribosome-recycling factor"/>
    <property type="match status" value="1"/>
</dbReference>
<dbReference type="HAMAP" id="MF_00040">
    <property type="entry name" value="RRF"/>
    <property type="match status" value="1"/>
</dbReference>
<dbReference type="InterPro" id="IPR002661">
    <property type="entry name" value="Ribosome_recyc_fac"/>
</dbReference>
<dbReference type="InterPro" id="IPR023584">
    <property type="entry name" value="Ribosome_recyc_fac_dom"/>
</dbReference>
<dbReference type="InterPro" id="IPR036191">
    <property type="entry name" value="RRF_sf"/>
</dbReference>
<dbReference type="NCBIfam" id="TIGR00496">
    <property type="entry name" value="frr"/>
    <property type="match status" value="1"/>
</dbReference>
<dbReference type="PANTHER" id="PTHR20982:SF3">
    <property type="entry name" value="MITOCHONDRIAL RIBOSOME RECYCLING FACTOR PSEUDO 1"/>
    <property type="match status" value="1"/>
</dbReference>
<dbReference type="PANTHER" id="PTHR20982">
    <property type="entry name" value="RIBOSOME RECYCLING FACTOR"/>
    <property type="match status" value="1"/>
</dbReference>
<dbReference type="Pfam" id="PF01765">
    <property type="entry name" value="RRF"/>
    <property type="match status" value="1"/>
</dbReference>
<dbReference type="SUPFAM" id="SSF55194">
    <property type="entry name" value="Ribosome recycling factor, RRF"/>
    <property type="match status" value="1"/>
</dbReference>
<accession>P61311</accession>
<organism>
    <name type="scientific">Wolbachia pipientis wMel</name>
    <dbReference type="NCBI Taxonomy" id="163164"/>
    <lineage>
        <taxon>Bacteria</taxon>
        <taxon>Pseudomonadati</taxon>
        <taxon>Pseudomonadota</taxon>
        <taxon>Alphaproteobacteria</taxon>
        <taxon>Rickettsiales</taxon>
        <taxon>Anaplasmataceae</taxon>
        <taxon>Wolbachieae</taxon>
        <taxon>Wolbachia</taxon>
    </lineage>
</organism>
<protein>
    <recommendedName>
        <fullName evidence="1">Ribosome-recycling factor</fullName>
        <shortName evidence="1">RRF</shortName>
    </recommendedName>
    <alternativeName>
        <fullName evidence="1">Ribosome-releasing factor</fullName>
    </alternativeName>
</protein>
<sequence length="185" mass="20860">MLNEIKAKTKERMLKTIQSFHDDIKGVRTGRASASLLDGIVVNIYGGHQKLNQVAGVSVIDNKTLSIKVWDISVVGEVKNAILNANLNLNPVVEGSTIRIALPDLTQETREKLVKLLHQFAENARIAIRNIRRDIMEETEKMKENKEISEDDFHGAKKEIQNITDDNIKKIDGELSIKEKDILNH</sequence>
<evidence type="ECO:0000255" key="1">
    <source>
        <dbReference type="HAMAP-Rule" id="MF_00040"/>
    </source>
</evidence>